<keyword id="KW-0025">Alternative splicing</keyword>
<keyword id="KW-0238">DNA-binding</keyword>
<keyword id="KW-0539">Nucleus</keyword>
<keyword id="KW-0597">Phosphoprotein</keyword>
<keyword id="KW-1267">Proteomics identification</keyword>
<keyword id="KW-1185">Reference proteome</keyword>
<sequence length="556" mass="61815">MASKPAAGKSRGEKRKRVVLTLKEKIDICTRLEKGESRKALMQEYNVGMSTLYDIRAHKAQLLRFFASSDSNKALEQRRTLHTPKLEHLDRVLYEWFLGKRSEGVPVSGPMLIEKAKDFYEQMQLTEPCVFSGGWLWRFKARHGIKKLDASSEKQSADHQAAEQFCAFFRSLAAEHGLSAEQVYNADETGLFWRCLPNPTPEGGAVPGPKQGKDRLTVLMCANATGSHRLKPLAIGKCSGPRAFKGIQHLPVAYKAQGNAWVDKEIFSDWFHHIFVPSVREHFRTIGLPEDSKAVLLLDSSRAHPQEAELVSSNVFTIFLPASVASLVQPMEQGIRRDFMRNFINPPVPLQGPHARYNMNDAIFSVACAWNAVPSHVFRRAWRKLWPSVAFAEGSSSEEELEAECFPVKPHNKSFAHILELVKEGSSCPGQLRQRQAASWGVAGREAEGGRPPAATSPAEVVWSSEKTPKADQDGRGDPGEGEEVAWEQAAVAFDAVLRFAERQPCFSAQEVGQLRALRAVFRSQQQETVGLEDVVVTSPEELAIPKCCLEASTET</sequence>
<reference key="1">
    <citation type="journal article" date="2006" name="Nature">
        <title>DNA sequence and analysis of human chromosome 8.</title>
        <authorList>
            <person name="Nusbaum C."/>
            <person name="Mikkelsen T.S."/>
            <person name="Zody M.C."/>
            <person name="Asakawa S."/>
            <person name="Taudien S."/>
            <person name="Garber M."/>
            <person name="Kodira C.D."/>
            <person name="Schueler M.G."/>
            <person name="Shimizu A."/>
            <person name="Whittaker C.A."/>
            <person name="Chang J.L."/>
            <person name="Cuomo C.A."/>
            <person name="Dewar K."/>
            <person name="FitzGerald M.G."/>
            <person name="Yang X."/>
            <person name="Allen N.R."/>
            <person name="Anderson S."/>
            <person name="Asakawa T."/>
            <person name="Blechschmidt K."/>
            <person name="Bloom T."/>
            <person name="Borowsky M.L."/>
            <person name="Butler J."/>
            <person name="Cook A."/>
            <person name="Corum B."/>
            <person name="DeArellano K."/>
            <person name="DeCaprio D."/>
            <person name="Dooley K.T."/>
            <person name="Dorris L. III"/>
            <person name="Engels R."/>
            <person name="Gloeckner G."/>
            <person name="Hafez N."/>
            <person name="Hagopian D.S."/>
            <person name="Hall J.L."/>
            <person name="Ishikawa S.K."/>
            <person name="Jaffe D.B."/>
            <person name="Kamat A."/>
            <person name="Kudoh J."/>
            <person name="Lehmann R."/>
            <person name="Lokitsang T."/>
            <person name="Macdonald P."/>
            <person name="Major J.E."/>
            <person name="Matthews C.D."/>
            <person name="Mauceli E."/>
            <person name="Menzel U."/>
            <person name="Mihalev A.H."/>
            <person name="Minoshima S."/>
            <person name="Murayama Y."/>
            <person name="Naylor J.W."/>
            <person name="Nicol R."/>
            <person name="Nguyen C."/>
            <person name="O'Leary S.B."/>
            <person name="O'Neill K."/>
            <person name="Parker S.C.J."/>
            <person name="Polley A."/>
            <person name="Raymond C.K."/>
            <person name="Reichwald K."/>
            <person name="Rodriguez J."/>
            <person name="Sasaki T."/>
            <person name="Schilhabel M."/>
            <person name="Siddiqui R."/>
            <person name="Smith C.L."/>
            <person name="Sneddon T.P."/>
            <person name="Talamas J.A."/>
            <person name="Tenzin P."/>
            <person name="Topham K."/>
            <person name="Venkataraman V."/>
            <person name="Wen G."/>
            <person name="Yamazaki S."/>
            <person name="Young S.K."/>
            <person name="Zeng Q."/>
            <person name="Zimmer A.R."/>
            <person name="Rosenthal A."/>
            <person name="Birren B.W."/>
            <person name="Platzer M."/>
            <person name="Shimizu N."/>
            <person name="Lander E.S."/>
        </authorList>
    </citation>
    <scope>NUCLEOTIDE SEQUENCE [LARGE SCALE GENOMIC DNA]</scope>
</reference>
<reference key="2">
    <citation type="submission" date="2014-09" db="EMBL/GenBank/DDBJ databases">
        <authorList>
            <person name="Mural R.J."/>
            <person name="Istrail S."/>
            <person name="Sutton G.G."/>
            <person name="Florea L."/>
            <person name="Halpern A.L."/>
            <person name="Mobarry C.M."/>
            <person name="Lippert R."/>
            <person name="Walenz B."/>
            <person name="Shatkay H."/>
            <person name="Dew I."/>
            <person name="Miller J.R."/>
            <person name="Flanigan M.J."/>
            <person name="Edwards N.J."/>
            <person name="Bolanos R."/>
            <person name="Fasulo D."/>
            <person name="Halldorsson B.V."/>
            <person name="Hannenhalli S."/>
            <person name="Turner R."/>
            <person name="Yooseph S."/>
            <person name="Lu F."/>
            <person name="Nusskern D.R."/>
            <person name="Shue B.C."/>
            <person name="Zheng X.H."/>
            <person name="Zhong F."/>
            <person name="Delcher A.L."/>
            <person name="Huson D.H."/>
            <person name="Kravitz S.A."/>
            <person name="Mouchard L."/>
            <person name="Reinert K."/>
            <person name="Remington K.A."/>
            <person name="Clark A.G."/>
            <person name="Waterman M.S."/>
            <person name="Eichler E.E."/>
            <person name="Adams M.D."/>
            <person name="Hunkapiller M.W."/>
            <person name="Myers E.W."/>
            <person name="Venter J.C."/>
        </authorList>
    </citation>
    <scope>NUCLEOTIDE SEQUENCE [LARGE SCALE GENOMIC DNA]</scope>
</reference>
<reference key="3">
    <citation type="journal article" date="2004" name="Genome Res.">
        <title>The status, quality, and expansion of the NIH full-length cDNA project: the Mammalian Gene Collection (MGC).</title>
        <authorList>
            <consortium name="The MGC Project Team"/>
        </authorList>
    </citation>
    <scope>NUCLEOTIDE SEQUENCE [LARGE SCALE MRNA] (ISOFORM 2)</scope>
    <source>
        <tissue>Uterus</tissue>
    </source>
</reference>
<reference key="4">
    <citation type="journal article" date="1998" name="Biochem. Biophys. Res. Commun.">
        <title>JH8, a gene highly homologous to the mouse jerky gene, maps to the region for childhood absence epilepsy on 8q24.</title>
        <authorList>
            <person name="Morita R."/>
            <person name="Miyazaki E."/>
            <person name="Fong C.-Y.G."/>
            <person name="Chen X.-N."/>
            <person name="Korenberg J.R."/>
            <person name="Delgado-Escueta A.V."/>
            <person name="Yamakawa K."/>
        </authorList>
    </citation>
    <scope>NUCLEOTIDE SEQUENCE [MRNA] OF 141-556 (ISOFORM 1)</scope>
    <scope>NUCLEOTIDE SEQUENCE [MRNA] OF 99-556 (ISOFORM 2)</scope>
    <scope>TISSUE SPECIFICITY</scope>
    <source>
        <tissue>Fetal brain</tissue>
    </source>
</reference>
<reference key="5">
    <citation type="journal article" date="2013" name="J. Proteome Res.">
        <title>Toward a comprehensive characterization of a human cancer cell phosphoproteome.</title>
        <authorList>
            <person name="Zhou H."/>
            <person name="Di Palma S."/>
            <person name="Preisinger C."/>
            <person name="Peng M."/>
            <person name="Polat A.N."/>
            <person name="Heck A.J."/>
            <person name="Mohammed S."/>
        </authorList>
    </citation>
    <scope>PHOSPHORYLATION [LARGE SCALE ANALYSIS] AT SER-414</scope>
    <scope>IDENTIFICATION BY MASS SPECTROMETRY [LARGE SCALE ANALYSIS]</scope>
    <source>
        <tissue>Cervix carcinoma</tissue>
        <tissue>Erythroleukemia</tissue>
    </source>
</reference>
<proteinExistence type="evidence at protein level"/>
<accession>O75564</accession>
<accession>D3DWI5</accession>
<accession>O75565</accession>
<accession>Q86XJ5</accession>
<dbReference type="EMBL" id="AC108002">
    <property type="status" value="NOT_ANNOTATED_CDS"/>
    <property type="molecule type" value="Genomic_DNA"/>
</dbReference>
<dbReference type="EMBL" id="KC877375">
    <property type="status" value="NOT_ANNOTATED_CDS"/>
    <property type="molecule type" value="Genomic_DNA"/>
</dbReference>
<dbReference type="EMBL" id="CH471162">
    <property type="protein sequence ID" value="EAW82315.1"/>
    <property type="molecule type" value="Genomic_DNA"/>
</dbReference>
<dbReference type="EMBL" id="CH471162">
    <property type="protein sequence ID" value="EAW82316.1"/>
    <property type="molecule type" value="Genomic_DNA"/>
</dbReference>
<dbReference type="EMBL" id="CH471162">
    <property type="protein sequence ID" value="EAW82317.1"/>
    <property type="molecule type" value="Genomic_DNA"/>
</dbReference>
<dbReference type="EMBL" id="BC043351">
    <property type="protein sequence ID" value="AAH43351.1"/>
    <property type="molecule type" value="mRNA"/>
</dbReference>
<dbReference type="EMBL" id="AF072467">
    <property type="protein sequence ID" value="AAC32352.1"/>
    <property type="molecule type" value="mRNA"/>
</dbReference>
<dbReference type="EMBL" id="AF072468">
    <property type="protein sequence ID" value="AAC32353.1"/>
    <property type="molecule type" value="mRNA"/>
</dbReference>
<dbReference type="CCDS" id="CCDS75796.1">
    <molecule id="O75564-2"/>
</dbReference>
<dbReference type="CCDS" id="CCDS75797.1">
    <molecule id="O75564-1"/>
</dbReference>
<dbReference type="RefSeq" id="NP_001070995.2">
    <molecule id="O75564-1"/>
    <property type="nucleotide sequence ID" value="NM_001077527.3"/>
</dbReference>
<dbReference type="RefSeq" id="NP_001266281.1">
    <molecule id="O75564-1"/>
    <property type="nucleotide sequence ID" value="NM_001279352.2"/>
</dbReference>
<dbReference type="RefSeq" id="NP_003715.3">
    <molecule id="O75564-2"/>
    <property type="nucleotide sequence ID" value="NM_003724.4"/>
</dbReference>
<dbReference type="RefSeq" id="XP_006716740.1">
    <molecule id="O75564-2"/>
    <property type="nucleotide sequence ID" value="XM_006716677.5"/>
</dbReference>
<dbReference type="RefSeq" id="XP_006716741.1">
    <molecule id="O75564-2"/>
    <property type="nucleotide sequence ID" value="XM_006716678.5"/>
</dbReference>
<dbReference type="RefSeq" id="XP_011515656.1">
    <property type="nucleotide sequence ID" value="XM_011517354.1"/>
</dbReference>
<dbReference type="RefSeq" id="XP_047278332.1">
    <molecule id="O75564-2"/>
    <property type="nucleotide sequence ID" value="XM_047422376.1"/>
</dbReference>
<dbReference type="RefSeq" id="XP_047278333.1">
    <molecule id="O75564-1"/>
    <property type="nucleotide sequence ID" value="XM_047422377.1"/>
</dbReference>
<dbReference type="RefSeq" id="XP_047278334.1">
    <molecule id="O75564-1"/>
    <property type="nucleotide sequence ID" value="XM_047422378.1"/>
</dbReference>
<dbReference type="RefSeq" id="XP_047278335.1">
    <molecule id="O75564-1"/>
    <property type="nucleotide sequence ID" value="XM_047422379.1"/>
</dbReference>
<dbReference type="RefSeq" id="XP_054217398.1">
    <molecule id="O75564-2"/>
    <property type="nucleotide sequence ID" value="XM_054361423.1"/>
</dbReference>
<dbReference type="RefSeq" id="XP_054217399.1">
    <molecule id="O75564-2"/>
    <property type="nucleotide sequence ID" value="XM_054361424.1"/>
</dbReference>
<dbReference type="RefSeq" id="XP_054217400.1">
    <molecule id="O75564-2"/>
    <property type="nucleotide sequence ID" value="XM_054361425.1"/>
</dbReference>
<dbReference type="RefSeq" id="XP_054217401.1">
    <molecule id="O75564-1"/>
    <property type="nucleotide sequence ID" value="XM_054361426.1"/>
</dbReference>
<dbReference type="RefSeq" id="XP_054217402.1">
    <molecule id="O75564-1"/>
    <property type="nucleotide sequence ID" value="XM_054361427.1"/>
</dbReference>
<dbReference type="RefSeq" id="XP_054217403.1">
    <molecule id="O75564-1"/>
    <property type="nucleotide sequence ID" value="XM_054361428.1"/>
</dbReference>
<dbReference type="SMR" id="O75564"/>
<dbReference type="FunCoup" id="O75564">
    <property type="interactions" value="521"/>
</dbReference>
<dbReference type="IntAct" id="O75564">
    <property type="interactions" value="44"/>
</dbReference>
<dbReference type="MINT" id="O75564"/>
<dbReference type="STRING" id="9606.ENSP00000482410"/>
<dbReference type="GlyGen" id="O75564">
    <property type="glycosylation" value="2 sites, 1 O-linked glycan (1 site)"/>
</dbReference>
<dbReference type="iPTMnet" id="O75564"/>
<dbReference type="PhosphoSitePlus" id="O75564"/>
<dbReference type="BioMuta" id="JRK"/>
<dbReference type="jPOST" id="O75564"/>
<dbReference type="MassIVE" id="O75564"/>
<dbReference type="PaxDb" id="9606-ENSP00000482410"/>
<dbReference type="PeptideAtlas" id="O75564"/>
<dbReference type="ProteomicsDB" id="50087"/>
<dbReference type="Antibodypedia" id="27777">
    <property type="antibodies" value="25 antibodies from 10 providers"/>
</dbReference>
<dbReference type="DNASU" id="8629"/>
<dbReference type="Ensembl" id="ENST00000571961.7">
    <molecule id="O75564-1"/>
    <property type="protein sequence ID" value="ENSP00000461610.1"/>
    <property type="gene ID" value="ENSG00000234616.9"/>
</dbReference>
<dbReference type="Ensembl" id="ENST00000612905.2">
    <molecule id="O75564-2"/>
    <property type="protein sequence ID" value="ENSP00000482410.1"/>
    <property type="gene ID" value="ENSG00000234616.9"/>
</dbReference>
<dbReference type="Ensembl" id="ENST00000614134.1">
    <molecule id="O75564-2"/>
    <property type="protein sequence ID" value="ENSP00000485390.1"/>
    <property type="gene ID" value="ENSG00000234616.9"/>
</dbReference>
<dbReference type="Ensembl" id="ENST00000615982.4">
    <molecule id="O75564-1"/>
    <property type="protein sequence ID" value="ENSP00000483808.1"/>
    <property type="gene ID" value="ENSG00000234616.9"/>
</dbReference>
<dbReference type="GeneID" id="8629"/>
<dbReference type="KEGG" id="hsa:8629"/>
<dbReference type="MANE-Select" id="ENST00000612905.2">
    <molecule id="O75564-2"/>
    <property type="protein sequence ID" value="ENSP00000482410.1"/>
    <property type="RefSeq nucleotide sequence ID" value="NM_003724.4"/>
    <property type="RefSeq protein sequence ID" value="NP_003715.3"/>
</dbReference>
<dbReference type="UCSC" id="uc033cbh.2">
    <property type="organism name" value="human"/>
</dbReference>
<dbReference type="UCSC" id="uc033cbj.1">
    <property type="organism name" value="human"/>
</dbReference>
<dbReference type="AGR" id="HGNC:6199"/>
<dbReference type="CTD" id="8629"/>
<dbReference type="DisGeNET" id="8629"/>
<dbReference type="GeneCards" id="JRK"/>
<dbReference type="HGNC" id="HGNC:6199">
    <property type="gene designation" value="JRK"/>
</dbReference>
<dbReference type="HPA" id="ENSG00000234616">
    <property type="expression patterns" value="Low tissue specificity"/>
</dbReference>
<dbReference type="MalaCards" id="JRK"/>
<dbReference type="MIM" id="603210">
    <property type="type" value="gene"/>
</dbReference>
<dbReference type="neXtProt" id="NX_O75564"/>
<dbReference type="OpenTargets" id="ENSG00000234616"/>
<dbReference type="Orphanet" id="64280">
    <property type="disease" value="Childhood absence epilepsy"/>
</dbReference>
<dbReference type="Orphanet" id="307">
    <property type="disease" value="Juvenile myoclonic epilepsy"/>
</dbReference>
<dbReference type="VEuPathDB" id="HostDB:ENSG00000234616"/>
<dbReference type="eggNOG" id="KOG3105">
    <property type="taxonomic scope" value="Eukaryota"/>
</dbReference>
<dbReference type="GeneTree" id="ENSGT00940000162277"/>
<dbReference type="InParanoid" id="O75564"/>
<dbReference type="OMA" id="RDFMRHF"/>
<dbReference type="OrthoDB" id="125347at2759"/>
<dbReference type="PAN-GO" id="O75564">
    <property type="GO annotations" value="2 GO annotations based on evolutionary models"/>
</dbReference>
<dbReference type="PhylomeDB" id="O75564"/>
<dbReference type="PathwayCommons" id="O75564"/>
<dbReference type="SignaLink" id="O75564"/>
<dbReference type="BioGRID-ORCS" id="8629">
    <property type="hits" value="9 hits in 262 CRISPR screens"/>
</dbReference>
<dbReference type="ChiTaRS" id="JRK">
    <property type="organism name" value="human"/>
</dbReference>
<dbReference type="GenomeRNAi" id="8629"/>
<dbReference type="Pharos" id="O75564">
    <property type="development level" value="Tdark"/>
</dbReference>
<dbReference type="PRO" id="PR:O75564"/>
<dbReference type="Proteomes" id="UP000005640">
    <property type="component" value="Chromosome 8"/>
</dbReference>
<dbReference type="RNAct" id="O75564">
    <property type="molecule type" value="protein"/>
</dbReference>
<dbReference type="Bgee" id="ENSG00000234616">
    <property type="expression patterns" value="Expressed in paraflocculus and 216 other cell types or tissues"/>
</dbReference>
<dbReference type="ExpressionAtlas" id="O75564">
    <property type="expression patterns" value="baseline and differential"/>
</dbReference>
<dbReference type="GO" id="GO:0005737">
    <property type="term" value="C:cytoplasm"/>
    <property type="evidence" value="ECO:0007669"/>
    <property type="project" value="Ensembl"/>
</dbReference>
<dbReference type="GO" id="GO:0005634">
    <property type="term" value="C:nucleus"/>
    <property type="evidence" value="ECO:0000318"/>
    <property type="project" value="GO_Central"/>
</dbReference>
<dbReference type="GO" id="GO:1990904">
    <property type="term" value="C:ribonucleoprotein complex"/>
    <property type="evidence" value="ECO:0007669"/>
    <property type="project" value="Ensembl"/>
</dbReference>
<dbReference type="GO" id="GO:0003677">
    <property type="term" value="F:DNA binding"/>
    <property type="evidence" value="ECO:0000318"/>
    <property type="project" value="GO_Central"/>
</dbReference>
<dbReference type="GO" id="GO:0003729">
    <property type="term" value="F:mRNA binding"/>
    <property type="evidence" value="ECO:0007669"/>
    <property type="project" value="Ensembl"/>
</dbReference>
<dbReference type="GO" id="GO:0090263">
    <property type="term" value="P:positive regulation of canonical Wnt signaling pathway"/>
    <property type="evidence" value="ECO:0000315"/>
    <property type="project" value="FlyBase"/>
</dbReference>
<dbReference type="FunFam" id="1.10.10.60:FF:000280">
    <property type="entry name" value="jerky protein homolog"/>
    <property type="match status" value="1"/>
</dbReference>
<dbReference type="Gene3D" id="1.10.10.60">
    <property type="entry name" value="Homeodomain-like"/>
    <property type="match status" value="2"/>
</dbReference>
<dbReference type="InterPro" id="IPR050863">
    <property type="entry name" value="CenT-Element_Derived"/>
</dbReference>
<dbReference type="InterPro" id="IPR004875">
    <property type="entry name" value="DDE_SF_endonuclease_dom"/>
</dbReference>
<dbReference type="InterPro" id="IPR009057">
    <property type="entry name" value="Homeodomain-like_sf"/>
</dbReference>
<dbReference type="InterPro" id="IPR006600">
    <property type="entry name" value="HTH_CenpB_DNA-bd_dom"/>
</dbReference>
<dbReference type="InterPro" id="IPR007889">
    <property type="entry name" value="HTH_Psq"/>
</dbReference>
<dbReference type="PANTHER" id="PTHR19303:SF11">
    <property type="entry name" value="JERKY PROTEIN HOMOLOG"/>
    <property type="match status" value="1"/>
</dbReference>
<dbReference type="PANTHER" id="PTHR19303">
    <property type="entry name" value="TRANSPOSON"/>
    <property type="match status" value="1"/>
</dbReference>
<dbReference type="Pfam" id="PF04218">
    <property type="entry name" value="CENP-B_N"/>
    <property type="match status" value="1"/>
</dbReference>
<dbReference type="Pfam" id="PF03184">
    <property type="entry name" value="DDE_1"/>
    <property type="match status" value="1"/>
</dbReference>
<dbReference type="Pfam" id="PF03221">
    <property type="entry name" value="HTH_Tnp_Tc5"/>
    <property type="match status" value="1"/>
</dbReference>
<dbReference type="SMART" id="SM00674">
    <property type="entry name" value="CENPB"/>
    <property type="match status" value="1"/>
</dbReference>
<dbReference type="SUPFAM" id="SSF46689">
    <property type="entry name" value="Homeodomain-like"/>
    <property type="match status" value="2"/>
</dbReference>
<dbReference type="PROSITE" id="PS51253">
    <property type="entry name" value="HTH_CENPB"/>
    <property type="match status" value="1"/>
</dbReference>
<dbReference type="PROSITE" id="PS50960">
    <property type="entry name" value="HTH_PSQ"/>
    <property type="match status" value="1"/>
</dbReference>
<protein>
    <recommendedName>
        <fullName evidence="8">Jerky protein homolog</fullName>
    </recommendedName>
</protein>
<gene>
    <name evidence="9" type="primary">JRK</name>
    <name evidence="7" type="synonym">JH8</name>
</gene>
<name>JERKY_HUMAN</name>
<organism>
    <name type="scientific">Homo sapiens</name>
    <name type="common">Human</name>
    <dbReference type="NCBI Taxonomy" id="9606"/>
    <lineage>
        <taxon>Eukaryota</taxon>
        <taxon>Metazoa</taxon>
        <taxon>Chordata</taxon>
        <taxon>Craniata</taxon>
        <taxon>Vertebrata</taxon>
        <taxon>Euteleostomi</taxon>
        <taxon>Mammalia</taxon>
        <taxon>Eutheria</taxon>
        <taxon>Euarchontoglires</taxon>
        <taxon>Primates</taxon>
        <taxon>Haplorrhini</taxon>
        <taxon>Catarrhini</taxon>
        <taxon>Hominidae</taxon>
        <taxon>Homo</taxon>
    </lineage>
</organism>
<evidence type="ECO:0000250" key="1"/>
<evidence type="ECO:0000255" key="2"/>
<evidence type="ECO:0000255" key="3">
    <source>
        <dbReference type="PROSITE-ProRule" id="PRU00320"/>
    </source>
</evidence>
<evidence type="ECO:0000255" key="4">
    <source>
        <dbReference type="PROSITE-ProRule" id="PRU00583"/>
    </source>
</evidence>
<evidence type="ECO:0000256" key="5">
    <source>
        <dbReference type="SAM" id="MobiDB-lite"/>
    </source>
</evidence>
<evidence type="ECO:0000269" key="6">
    <source>
    </source>
</evidence>
<evidence type="ECO:0000303" key="7">
    <source>
    </source>
</evidence>
<evidence type="ECO:0000305" key="8"/>
<evidence type="ECO:0000312" key="9">
    <source>
        <dbReference type="HGNC" id="HGNC:6199"/>
    </source>
</evidence>
<evidence type="ECO:0007744" key="10">
    <source>
    </source>
</evidence>
<feature type="chain" id="PRO_0000126128" description="Jerky protein homolog">
    <location>
        <begin position="1"/>
        <end position="556"/>
    </location>
</feature>
<feature type="domain" description="HTH psq-type" evidence="3">
    <location>
        <begin position="11"/>
        <end position="62"/>
    </location>
</feature>
<feature type="domain" description="HTH CENPB-type" evidence="4">
    <location>
        <begin position="77"/>
        <end position="149"/>
    </location>
</feature>
<feature type="domain" description="DDE-1" evidence="2">
    <location>
        <begin position="213"/>
        <end position="382"/>
    </location>
</feature>
<feature type="DNA-binding region" description="H-T-H motif" evidence="3">
    <location>
        <begin position="38"/>
        <end position="58"/>
    </location>
</feature>
<feature type="DNA-binding region" description="H-T-H motif" evidence="4">
    <location>
        <begin position="110"/>
        <end position="142"/>
    </location>
</feature>
<feature type="region of interest" description="Disordered" evidence="5">
    <location>
        <begin position="439"/>
        <end position="482"/>
    </location>
</feature>
<feature type="compositionally biased region" description="Basic and acidic residues" evidence="5">
    <location>
        <begin position="467"/>
        <end position="479"/>
    </location>
</feature>
<feature type="modified residue" description="Phosphoserine" evidence="10">
    <location>
        <position position="414"/>
    </location>
</feature>
<feature type="splice variant" id="VSP_059375" description="In isoform 2.">
    <original>ETVGLEDVVVTSPEELAIPKCCLEASTET</original>
    <variation>VRRRRGALGAVVKVEALQEGPGGCGATAQSPLPCSSTAGDN</variation>
    <location>
        <begin position="528"/>
        <end position="556"/>
    </location>
</feature>
<feature type="sequence conflict" description="In Ref. 4; AAC32353." evidence="8" ref="4">
    <original>R</original>
    <variation>G</variation>
    <location>
        <position position="476"/>
    </location>
</feature>
<comment type="function">
    <text evidence="1">May bind DNA.</text>
</comment>
<comment type="interaction">
    <interactant intactId="EBI-8607681">
        <id>O75564</id>
    </interactant>
    <interactant intactId="EBI-491549">
        <id>P35222</id>
        <label>CTNNB1</label>
    </interactant>
    <organismsDiffer>false</organismsDiffer>
    <experiments>3</experiments>
</comment>
<comment type="interaction">
    <interactant intactId="EBI-8607681">
        <id>O75564</id>
    </interactant>
    <interactant intactId="EBI-984464">
        <id>P27782</id>
        <label>Lef1</label>
    </interactant>
    <organismsDiffer>true</organismsDiffer>
    <experiments>3</experiments>
</comment>
<comment type="interaction">
    <interactant intactId="EBI-17181882">
        <id>O75564-2</id>
    </interactant>
    <interactant intactId="EBI-3905054">
        <id>P13196</id>
        <label>ALAS1</label>
    </interactant>
    <organismsDiffer>false</organismsDiffer>
    <experiments>3</experiments>
</comment>
<comment type="interaction">
    <interactant intactId="EBI-17181882">
        <id>O75564-2</id>
    </interactant>
    <interactant intactId="EBI-358049">
        <id>Q13895</id>
        <label>BYSL</label>
    </interactant>
    <organismsDiffer>false</organismsDiffer>
    <experiments>3</experiments>
</comment>
<comment type="interaction">
    <interactant intactId="EBI-17181882">
        <id>O75564-2</id>
    </interactant>
    <interactant intactId="EBI-739879">
        <id>Q53TS8</id>
        <label>C2CD6</label>
    </interactant>
    <organismsDiffer>false</organismsDiffer>
    <experiments>3</experiments>
</comment>
<comment type="interaction">
    <interactant intactId="EBI-17181882">
        <id>O75564-2</id>
    </interactant>
    <interactant intactId="EBI-10961624">
        <id>Q2TAC2-2</id>
        <label>CCDC57</label>
    </interactant>
    <organismsDiffer>false</organismsDiffer>
    <experiments>3</experiments>
</comment>
<comment type="interaction">
    <interactant intactId="EBI-17181882">
        <id>O75564-2</id>
    </interactant>
    <interactant intactId="EBI-295634">
        <id>Q16543</id>
        <label>CDC37</label>
    </interactant>
    <organismsDiffer>false</organismsDiffer>
    <experiments>3</experiments>
</comment>
<comment type="interaction">
    <interactant intactId="EBI-17181882">
        <id>O75564-2</id>
    </interactant>
    <interactant intactId="EBI-10253274">
        <id>Q6P9H4</id>
        <label>CNKSR3</label>
    </interactant>
    <organismsDiffer>false</organismsDiffer>
    <experiments>3</experiments>
</comment>
<comment type="interaction">
    <interactant intactId="EBI-17181882">
        <id>O75564-2</id>
    </interactant>
    <interactant intactId="EBI-719941">
        <id>Q3B820</id>
        <label>FAM161A</label>
    </interactant>
    <organismsDiffer>false</organismsDiffer>
    <experiments>3</experiments>
</comment>
<comment type="interaction">
    <interactant intactId="EBI-17181882">
        <id>O75564-2</id>
    </interactant>
    <interactant intactId="EBI-2510157">
        <id>Q96EF6</id>
        <label>FBXO17</label>
    </interactant>
    <organismsDiffer>false</organismsDiffer>
    <experiments>3</experiments>
</comment>
<comment type="interaction">
    <interactant intactId="EBI-17181882">
        <id>O75564-2</id>
    </interactant>
    <interactant intactId="EBI-5916454">
        <id>A6NEM1</id>
        <label>GOLGA6L9</label>
    </interactant>
    <organismsDiffer>false</organismsDiffer>
    <experiments>3</experiments>
</comment>
<comment type="interaction">
    <interactant intactId="EBI-17181882">
        <id>O75564-2</id>
    </interactant>
    <interactant intactId="EBI-7116203">
        <id>O75031</id>
        <label>HSF2BP</label>
    </interactant>
    <organismsDiffer>false</organismsDiffer>
    <experiments>3</experiments>
</comment>
<comment type="interaction">
    <interactant intactId="EBI-17181882">
        <id>O75564-2</id>
    </interactant>
    <interactant intactId="EBI-2512448">
        <id>Q12894</id>
        <label>IFRD2</label>
    </interactant>
    <organismsDiffer>false</organismsDiffer>
    <experiments>3</experiments>
</comment>
<comment type="interaction">
    <interactant intactId="EBI-17181882">
        <id>O75564-2</id>
    </interactant>
    <interactant intactId="EBI-710124">
        <id>O60341</id>
        <label>KDM1A</label>
    </interactant>
    <organismsDiffer>false</organismsDiffer>
    <experiments>3</experiments>
</comment>
<comment type="interaction">
    <interactant intactId="EBI-17181882">
        <id>O75564-2</id>
    </interactant>
    <interactant intactId="EBI-359923">
        <id>O60684</id>
        <label>KPNA6</label>
    </interactant>
    <organismsDiffer>false</organismsDiffer>
    <experiments>3</experiments>
</comment>
<comment type="interaction">
    <interactant intactId="EBI-17181882">
        <id>O75564-2</id>
    </interactant>
    <interactant intactId="EBI-740738">
        <id>O95751</id>
        <label>LDOC1</label>
    </interactant>
    <organismsDiffer>false</organismsDiffer>
    <experiments>3</experiments>
</comment>
<comment type="interaction">
    <interactant intactId="EBI-17181882">
        <id>O75564-2</id>
    </interactant>
    <interactant intactId="EBI-10274069">
        <id>Q8TCE9</id>
        <label>LGALS14</label>
    </interactant>
    <organismsDiffer>false</organismsDiffer>
    <experiments>3</experiments>
</comment>
<comment type="interaction">
    <interactant intactId="EBI-17181882">
        <id>O75564-2</id>
    </interactant>
    <interactant intactId="EBI-11522433">
        <id>Q5JR59-3</id>
        <label>MTUS2</label>
    </interactant>
    <organismsDiffer>false</organismsDiffer>
    <experiments>3</experiments>
</comment>
<comment type="interaction">
    <interactant intactId="EBI-17181882">
        <id>O75564-2</id>
    </interactant>
    <interactant intactId="EBI-10239064">
        <id>Q17RL8</id>
        <label>PDZD4</label>
    </interactant>
    <organismsDiffer>false</organismsDiffer>
    <experiments>3</experiments>
</comment>
<comment type="interaction">
    <interactant intactId="EBI-17181882">
        <id>O75564-2</id>
    </interactant>
    <interactant intactId="EBI-79165">
        <id>Q9NRD5</id>
        <label>PICK1</label>
    </interactant>
    <organismsDiffer>false</organismsDiffer>
    <experiments>3</experiments>
</comment>
<comment type="interaction">
    <interactant intactId="EBI-17181882">
        <id>O75564-2</id>
    </interactant>
    <interactant intactId="EBI-2348662">
        <id>Q96MT3</id>
        <label>PRICKLE1</label>
    </interactant>
    <organismsDiffer>false</organismsDiffer>
    <experiments>3</experiments>
</comment>
<comment type="interaction">
    <interactant intactId="EBI-17181882">
        <id>O75564-2</id>
    </interactant>
    <interactant intactId="EBI-1105213">
        <id>Q9UBB9</id>
        <label>TFIP11</label>
    </interactant>
    <organismsDiffer>false</organismsDiffer>
    <experiments>3</experiments>
</comment>
<comment type="interaction">
    <interactant intactId="EBI-17181882">
        <id>O75564-2</id>
    </interactant>
    <interactant intactId="EBI-1642100">
        <id>P67936</id>
        <label>TPM4</label>
    </interactant>
    <organismsDiffer>false</organismsDiffer>
    <experiments>3</experiments>
</comment>
<comment type="interaction">
    <interactant intactId="EBI-17181882">
        <id>O75564-2</id>
    </interactant>
    <interactant intactId="EBI-740098">
        <id>P36406</id>
        <label>TRIM23</label>
    </interactant>
    <organismsDiffer>false</organismsDiffer>
    <experiments>3</experiments>
</comment>
<comment type="interaction">
    <interactant intactId="EBI-17181882">
        <id>O75564-2</id>
    </interactant>
    <interactant intactId="EBI-725997">
        <id>Q8WV44</id>
        <label>TRIM41</label>
    </interactant>
    <organismsDiffer>false</organismsDiffer>
    <experiments>3</experiments>
</comment>
<comment type="interaction">
    <interactant intactId="EBI-17181882">
        <id>O75564-2</id>
    </interactant>
    <interactant intactId="EBI-6550597">
        <id>Q15642-2</id>
        <label>TRIP10</label>
    </interactant>
    <organismsDiffer>false</organismsDiffer>
    <experiments>3</experiments>
</comment>
<comment type="interaction">
    <interactant intactId="EBI-17181882">
        <id>O75564-2</id>
    </interactant>
    <interactant intactId="EBI-744794">
        <id>Q9BZW7</id>
        <label>TSGA10</label>
    </interactant>
    <organismsDiffer>false</organismsDiffer>
    <experiments>3</experiments>
</comment>
<comment type="interaction">
    <interactant intactId="EBI-17181882">
        <id>O75564-2</id>
    </interactant>
    <interactant intactId="EBI-7877438">
        <id>P42681</id>
        <label>TXK</label>
    </interactant>
    <organismsDiffer>false</organismsDiffer>
    <experiments>3</experiments>
</comment>
<comment type="interaction">
    <interactant intactId="EBI-17181882">
        <id>O75564-2</id>
    </interactant>
    <interactant intactId="EBI-743272">
        <id>O75604</id>
        <label>USP2</label>
    </interactant>
    <organismsDiffer>false</organismsDiffer>
    <experiments>3</experiments>
</comment>
<comment type="interaction">
    <interactant intactId="EBI-17181882">
        <id>O75564-2</id>
    </interactant>
    <interactant intactId="EBI-11737646">
        <id>Q5TAP6</id>
        <label>UTP14C</label>
    </interactant>
    <organismsDiffer>false</organismsDiffer>
    <experiments>3</experiments>
</comment>
<comment type="interaction">
    <interactant intactId="EBI-17181882">
        <id>O75564-2</id>
    </interactant>
    <interactant intactId="EBI-742740">
        <id>Q96BR9</id>
        <label>ZBTB8A</label>
    </interactant>
    <organismsDiffer>false</organismsDiffer>
    <experiments>3</experiments>
</comment>
<comment type="interaction">
    <interactant intactId="EBI-17181882">
        <id>O75564-2</id>
    </interactant>
    <interactant intactId="EBI-10252492">
        <id>Q6P1L6</id>
        <label>ZNF343</label>
    </interactant>
    <organismsDiffer>false</organismsDiffer>
    <experiments>3</experiments>
</comment>
<comment type="interaction">
    <interactant intactId="EBI-17181882">
        <id>O75564-2</id>
    </interactant>
    <interactant intactId="EBI-740727">
        <id>Q8TAU3</id>
        <label>ZNF417</label>
    </interactant>
    <organismsDiffer>false</organismsDiffer>
    <experiments>3</experiments>
</comment>
<comment type="interaction">
    <interactant intactId="EBI-17181882">
        <id>O75564-2</id>
    </interactant>
    <interactant intactId="EBI-4395669">
        <id>Q6ZNG0</id>
        <label>ZNF620</label>
    </interactant>
    <organismsDiffer>false</organismsDiffer>
    <experiments>3</experiments>
</comment>
<comment type="interaction">
    <interactant intactId="EBI-17181882">
        <id>O75564-2</id>
    </interactant>
    <interactant intactId="EBI-9977294">
        <id>Q9UEG4</id>
        <label>ZNF629</label>
    </interactant>
    <organismsDiffer>false</organismsDiffer>
    <experiments>3</experiments>
</comment>
<comment type="interaction">
    <interactant intactId="EBI-17181882">
        <id>O75564-2</id>
    </interactant>
    <interactant intactId="EBI-625509">
        <id>Q8N720</id>
        <label>ZNF655</label>
    </interactant>
    <organismsDiffer>false</organismsDiffer>
    <experiments>3</experiments>
</comment>
<comment type="interaction">
    <interactant intactId="EBI-17181882">
        <id>O75564-2</id>
    </interactant>
    <interactant intactId="EBI-527853">
        <id>Q9UGI0</id>
        <label>ZRANB1</label>
    </interactant>
    <organismsDiffer>false</organismsDiffer>
    <experiments>3</experiments>
</comment>
<comment type="subcellular location">
    <subcellularLocation>
        <location evidence="4">Nucleus</location>
    </subcellularLocation>
</comment>
<comment type="alternative products">
    <event type="alternative splicing"/>
    <isoform>
        <id>O75564-1</id>
        <name>1</name>
        <sequence type="displayed"/>
    </isoform>
    <isoform>
        <id>O75564-2</id>
        <name>2</name>
        <sequence type="described" ref="VSP_059375"/>
    </isoform>
</comment>
<comment type="tissue specificity">
    <text evidence="6">Expressed ubiquitously.</text>
</comment>
<comment type="similarity">
    <text evidence="8">Belongs to the tigger transposable element derived protein family.</text>
</comment>